<comment type="function">
    <text evidence="1">May play a role in DNA repair. It seems to be involved in an RecBC-independent recombinational process of DNA repair. It may act with RecF and RecO.</text>
</comment>
<comment type="similarity">
    <text evidence="1">Belongs to the RecR family.</text>
</comment>
<evidence type="ECO:0000255" key="1">
    <source>
        <dbReference type="HAMAP-Rule" id="MF_00017"/>
    </source>
</evidence>
<keyword id="KW-0227">DNA damage</keyword>
<keyword id="KW-0233">DNA recombination</keyword>
<keyword id="KW-0234">DNA repair</keyword>
<keyword id="KW-0479">Metal-binding</keyword>
<keyword id="KW-0862">Zinc</keyword>
<keyword id="KW-0863">Zinc-finger</keyword>
<sequence length="201" mass="21963">MQTSPLLTQLMEALRCLPGVGPKSAQRMAFTLLQRDRSGGMRLAQALTRAMSEIGHCADCRTFTEQEVCNICSNPRRQENGQICVVESPADIYAIEQTGQFSGRYFVLMGHLSPLDGIGPDDIGLDRLEQRLAEEKITEVILATNPTVEGEATANYIAELCAQYDVEASRIAHGVPVGGELEMVDGTTLSHSLAGRHKIRF</sequence>
<reference key="1">
    <citation type="journal article" date="2011" name="Proc. Natl. Acad. Sci. U.S.A.">
        <title>Genomic anatomy of Escherichia coli O157:H7 outbreaks.</title>
        <authorList>
            <person name="Eppinger M."/>
            <person name="Mammel M.K."/>
            <person name="Leclerc J.E."/>
            <person name="Ravel J."/>
            <person name="Cebula T.A."/>
        </authorList>
    </citation>
    <scope>NUCLEOTIDE SEQUENCE [LARGE SCALE GENOMIC DNA]</scope>
    <source>
        <strain>EC4115 / EHEC</strain>
    </source>
</reference>
<gene>
    <name evidence="1" type="primary">recR</name>
    <name type="ordered locus">ECH74115_0563</name>
</gene>
<name>RECR_ECO5E</name>
<accession>B5Z3Y2</accession>
<feature type="chain" id="PRO_1000089725" description="Recombination protein RecR">
    <location>
        <begin position="1"/>
        <end position="201"/>
    </location>
</feature>
<feature type="domain" description="Toprim" evidence="1">
    <location>
        <begin position="81"/>
        <end position="176"/>
    </location>
</feature>
<feature type="zinc finger region" description="C4-type" evidence="1">
    <location>
        <begin position="57"/>
        <end position="72"/>
    </location>
</feature>
<dbReference type="EMBL" id="CP001164">
    <property type="protein sequence ID" value="ACI34851.1"/>
    <property type="molecule type" value="Genomic_DNA"/>
</dbReference>
<dbReference type="RefSeq" id="WP_001195025.1">
    <property type="nucleotide sequence ID" value="NC_011353.1"/>
</dbReference>
<dbReference type="SMR" id="B5Z3Y2"/>
<dbReference type="GeneID" id="93776978"/>
<dbReference type="KEGG" id="ecf:ECH74115_0563"/>
<dbReference type="HOGENOM" id="CLU_060739_1_2_6"/>
<dbReference type="GO" id="GO:0003677">
    <property type="term" value="F:DNA binding"/>
    <property type="evidence" value="ECO:0007669"/>
    <property type="project" value="UniProtKB-UniRule"/>
</dbReference>
<dbReference type="GO" id="GO:0008270">
    <property type="term" value="F:zinc ion binding"/>
    <property type="evidence" value="ECO:0007669"/>
    <property type="project" value="UniProtKB-KW"/>
</dbReference>
<dbReference type="GO" id="GO:0006310">
    <property type="term" value="P:DNA recombination"/>
    <property type="evidence" value="ECO:0007669"/>
    <property type="project" value="UniProtKB-UniRule"/>
</dbReference>
<dbReference type="GO" id="GO:0006281">
    <property type="term" value="P:DNA repair"/>
    <property type="evidence" value="ECO:0007669"/>
    <property type="project" value="UniProtKB-UniRule"/>
</dbReference>
<dbReference type="CDD" id="cd01025">
    <property type="entry name" value="TOPRIM_recR"/>
    <property type="match status" value="1"/>
</dbReference>
<dbReference type="FunFam" id="1.10.8.420:FF:000001">
    <property type="entry name" value="Recombination protein RecR"/>
    <property type="match status" value="1"/>
</dbReference>
<dbReference type="FunFam" id="3.40.1360.10:FF:000001">
    <property type="entry name" value="Recombination protein RecR"/>
    <property type="match status" value="1"/>
</dbReference>
<dbReference type="Gene3D" id="3.40.1360.10">
    <property type="match status" value="1"/>
</dbReference>
<dbReference type="Gene3D" id="6.10.250.240">
    <property type="match status" value="1"/>
</dbReference>
<dbReference type="Gene3D" id="1.10.8.420">
    <property type="entry name" value="RecR Domain 1"/>
    <property type="match status" value="1"/>
</dbReference>
<dbReference type="HAMAP" id="MF_00017">
    <property type="entry name" value="RecR"/>
    <property type="match status" value="1"/>
</dbReference>
<dbReference type="InterPro" id="IPR000093">
    <property type="entry name" value="DNA_Rcmb_RecR"/>
</dbReference>
<dbReference type="InterPro" id="IPR023627">
    <property type="entry name" value="Rcmb_RecR"/>
</dbReference>
<dbReference type="InterPro" id="IPR015967">
    <property type="entry name" value="Rcmb_RecR_Znf"/>
</dbReference>
<dbReference type="InterPro" id="IPR006171">
    <property type="entry name" value="TOPRIM_dom"/>
</dbReference>
<dbReference type="InterPro" id="IPR034137">
    <property type="entry name" value="TOPRIM_RecR"/>
</dbReference>
<dbReference type="NCBIfam" id="TIGR00615">
    <property type="entry name" value="recR"/>
    <property type="match status" value="1"/>
</dbReference>
<dbReference type="PANTHER" id="PTHR30446">
    <property type="entry name" value="RECOMBINATION PROTEIN RECR"/>
    <property type="match status" value="1"/>
</dbReference>
<dbReference type="PANTHER" id="PTHR30446:SF0">
    <property type="entry name" value="RECOMBINATION PROTEIN RECR"/>
    <property type="match status" value="1"/>
</dbReference>
<dbReference type="Pfam" id="PF21175">
    <property type="entry name" value="RecR_C"/>
    <property type="match status" value="1"/>
</dbReference>
<dbReference type="Pfam" id="PF21176">
    <property type="entry name" value="RecR_HhH"/>
    <property type="match status" value="1"/>
</dbReference>
<dbReference type="Pfam" id="PF02132">
    <property type="entry name" value="RecR_ZnF"/>
    <property type="match status" value="1"/>
</dbReference>
<dbReference type="Pfam" id="PF13662">
    <property type="entry name" value="Toprim_4"/>
    <property type="match status" value="1"/>
</dbReference>
<dbReference type="SMART" id="SM00493">
    <property type="entry name" value="TOPRIM"/>
    <property type="match status" value="1"/>
</dbReference>
<dbReference type="SUPFAM" id="SSF111304">
    <property type="entry name" value="Recombination protein RecR"/>
    <property type="match status" value="1"/>
</dbReference>
<dbReference type="PROSITE" id="PS01300">
    <property type="entry name" value="RECR"/>
    <property type="match status" value="1"/>
</dbReference>
<dbReference type="PROSITE" id="PS50880">
    <property type="entry name" value="TOPRIM"/>
    <property type="match status" value="1"/>
</dbReference>
<organism>
    <name type="scientific">Escherichia coli O157:H7 (strain EC4115 / EHEC)</name>
    <dbReference type="NCBI Taxonomy" id="444450"/>
    <lineage>
        <taxon>Bacteria</taxon>
        <taxon>Pseudomonadati</taxon>
        <taxon>Pseudomonadota</taxon>
        <taxon>Gammaproteobacteria</taxon>
        <taxon>Enterobacterales</taxon>
        <taxon>Enterobacteriaceae</taxon>
        <taxon>Escherichia</taxon>
    </lineage>
</organism>
<protein>
    <recommendedName>
        <fullName evidence="1">Recombination protein RecR</fullName>
    </recommendedName>
</protein>
<proteinExistence type="inferred from homology"/>